<gene>
    <name evidence="1" type="primary">glyA</name>
    <name type="ordered locus">Mbar_A2316</name>
</gene>
<dbReference type="EC" id="2.1.2.1" evidence="1 2"/>
<dbReference type="EMBL" id="CP000099">
    <property type="protein sequence ID" value="AAZ71240.1"/>
    <property type="molecule type" value="Genomic_DNA"/>
</dbReference>
<dbReference type="SMR" id="Q46A52"/>
<dbReference type="STRING" id="269797.Mbar_A2316"/>
<dbReference type="PaxDb" id="269797-Mbar_A2316"/>
<dbReference type="KEGG" id="mba:Mbar_A2316"/>
<dbReference type="eggNOG" id="arCOG00070">
    <property type="taxonomic scope" value="Archaea"/>
</dbReference>
<dbReference type="HOGENOM" id="CLU_022477_2_1_2"/>
<dbReference type="OrthoDB" id="5821at2157"/>
<dbReference type="BRENDA" id="2.1.2.1">
    <property type="organism ID" value="3250"/>
</dbReference>
<dbReference type="UniPathway" id="UPA00193"/>
<dbReference type="UniPathway" id="UPA00288">
    <property type="reaction ID" value="UER01023"/>
</dbReference>
<dbReference type="GO" id="GO:0005737">
    <property type="term" value="C:cytoplasm"/>
    <property type="evidence" value="ECO:0007669"/>
    <property type="project" value="UniProtKB-SubCell"/>
</dbReference>
<dbReference type="GO" id="GO:0004372">
    <property type="term" value="F:glycine hydroxymethyltransferase activity"/>
    <property type="evidence" value="ECO:0007669"/>
    <property type="project" value="UniProtKB-UniRule"/>
</dbReference>
<dbReference type="GO" id="GO:0030170">
    <property type="term" value="F:pyridoxal phosphate binding"/>
    <property type="evidence" value="ECO:0007669"/>
    <property type="project" value="UniProtKB-UniRule"/>
</dbReference>
<dbReference type="GO" id="GO:0019264">
    <property type="term" value="P:glycine biosynthetic process from serine"/>
    <property type="evidence" value="ECO:0007669"/>
    <property type="project" value="UniProtKB-UniRule"/>
</dbReference>
<dbReference type="GO" id="GO:0035999">
    <property type="term" value="P:tetrahydrofolate interconversion"/>
    <property type="evidence" value="ECO:0007669"/>
    <property type="project" value="UniProtKB-UniRule"/>
</dbReference>
<dbReference type="CDD" id="cd00378">
    <property type="entry name" value="SHMT"/>
    <property type="match status" value="1"/>
</dbReference>
<dbReference type="FunFam" id="3.40.640.10:FF:000001">
    <property type="entry name" value="Serine hydroxymethyltransferase"/>
    <property type="match status" value="1"/>
</dbReference>
<dbReference type="FunFam" id="3.90.1150.10:FF:000003">
    <property type="entry name" value="Serine hydroxymethyltransferase"/>
    <property type="match status" value="1"/>
</dbReference>
<dbReference type="Gene3D" id="3.90.1150.10">
    <property type="entry name" value="Aspartate Aminotransferase, domain 1"/>
    <property type="match status" value="1"/>
</dbReference>
<dbReference type="Gene3D" id="3.40.640.10">
    <property type="entry name" value="Type I PLP-dependent aspartate aminotransferase-like (Major domain)"/>
    <property type="match status" value="1"/>
</dbReference>
<dbReference type="HAMAP" id="MF_00051">
    <property type="entry name" value="SHMT"/>
    <property type="match status" value="1"/>
</dbReference>
<dbReference type="InterPro" id="IPR015424">
    <property type="entry name" value="PyrdxlP-dep_Trfase"/>
</dbReference>
<dbReference type="InterPro" id="IPR015421">
    <property type="entry name" value="PyrdxlP-dep_Trfase_major"/>
</dbReference>
<dbReference type="InterPro" id="IPR015422">
    <property type="entry name" value="PyrdxlP-dep_Trfase_small"/>
</dbReference>
<dbReference type="InterPro" id="IPR001085">
    <property type="entry name" value="Ser_HO-MeTrfase"/>
</dbReference>
<dbReference type="InterPro" id="IPR049943">
    <property type="entry name" value="Ser_HO-MeTrfase-like"/>
</dbReference>
<dbReference type="InterPro" id="IPR019798">
    <property type="entry name" value="Ser_HO-MeTrfase_PLP_BS"/>
</dbReference>
<dbReference type="InterPro" id="IPR039429">
    <property type="entry name" value="SHMT-like_dom"/>
</dbReference>
<dbReference type="NCBIfam" id="NF000586">
    <property type="entry name" value="PRK00011.1"/>
    <property type="match status" value="1"/>
</dbReference>
<dbReference type="PANTHER" id="PTHR11680">
    <property type="entry name" value="SERINE HYDROXYMETHYLTRANSFERASE"/>
    <property type="match status" value="1"/>
</dbReference>
<dbReference type="PANTHER" id="PTHR11680:SF35">
    <property type="entry name" value="SERINE HYDROXYMETHYLTRANSFERASE 1"/>
    <property type="match status" value="1"/>
</dbReference>
<dbReference type="Pfam" id="PF00464">
    <property type="entry name" value="SHMT"/>
    <property type="match status" value="1"/>
</dbReference>
<dbReference type="PIRSF" id="PIRSF000412">
    <property type="entry name" value="SHMT"/>
    <property type="match status" value="1"/>
</dbReference>
<dbReference type="SUPFAM" id="SSF53383">
    <property type="entry name" value="PLP-dependent transferases"/>
    <property type="match status" value="1"/>
</dbReference>
<dbReference type="PROSITE" id="PS00096">
    <property type="entry name" value="SHMT"/>
    <property type="match status" value="1"/>
</dbReference>
<comment type="function">
    <text evidence="2">Catalyzes the reversible interconversion of serine and glycine with tetrahydrofolate (THF) serving as the one-carbon carrier. Appears to be specific for THF as the pteridine substrate, since the use of tetrahydromethanopterin (H4MPT) is much less efficient. Also exhibits THF-independent aldolase activity toward beta-hydroxyamino acids, producing glycine and aldehydes, via a retro-aldol mechanism. Thus, is able to catalyze the cleavage of L-allo-threonine and L-threo-beta-phenylserine.</text>
</comment>
<comment type="catalytic activity">
    <reaction evidence="1 2">
        <text>(6R)-5,10-methylene-5,6,7,8-tetrahydrofolate + glycine + H2O = (6S)-5,6,7,8-tetrahydrofolate + L-serine</text>
        <dbReference type="Rhea" id="RHEA:15481"/>
        <dbReference type="ChEBI" id="CHEBI:15377"/>
        <dbReference type="ChEBI" id="CHEBI:15636"/>
        <dbReference type="ChEBI" id="CHEBI:33384"/>
        <dbReference type="ChEBI" id="CHEBI:57305"/>
        <dbReference type="ChEBI" id="CHEBI:57453"/>
        <dbReference type="EC" id="2.1.2.1"/>
    </reaction>
</comment>
<comment type="cofactor">
    <cofactor evidence="1 2">
        <name>pyridoxal 5'-phosphate</name>
        <dbReference type="ChEBI" id="CHEBI:597326"/>
    </cofactor>
</comment>
<comment type="biophysicochemical properties">
    <kinetics>
        <KM evidence="2">0.002 mM for tetrahydrofolate (at pH 7.2 and 37 degrees Celsius)</KM>
        <KM evidence="2">0.2 mM for L-serine (at pH 7.2 and 37 degrees Celsius)</KM>
        <KM evidence="2">2 mM for L-threonine (at pH 7.2 and 37 degrees Celsius)</KM>
        <KM evidence="2">0.3 mM for L-allo-threonine (at pH 7.2 and 37 degrees Celsius)</KM>
        <Vmax evidence="2">6.0 umol/min/mg enzyme for the serine hydroxymethyltransferase reaction with THF as the pteridine substrate (at pH 7.2 and 37 degrees Celsius)</Vmax>
        <Vmax evidence="2">0.4 umol/min/mg enzyme for the retro-aldol cleavage of L-threonine (at pH 7.2 and 37 degrees Celsius)</Vmax>
        <Vmax evidence="2">1.6 umol/min/mg enzyme for the retro-aldol cleavage of L-allo-threonine (at pH 7.2 and 37 degrees Celsius)</Vmax>
        <text>The apparent KM for tetrahydromethanopterin (H4MPT) is superior to 0.3 mM (at pH 7.2 and 37 degrees Celsius).</text>
    </kinetics>
</comment>
<comment type="pathway">
    <text evidence="1">One-carbon metabolism; tetrahydrofolate interconversion.</text>
</comment>
<comment type="pathway">
    <text evidence="1">Amino-acid biosynthesis; glycine biosynthesis; glycine from L-serine: step 1/1.</text>
</comment>
<comment type="subunit">
    <text evidence="1 2">Homodimer.</text>
</comment>
<comment type="subcellular location">
    <subcellularLocation>
        <location evidence="1">Cytoplasm</location>
    </subcellularLocation>
</comment>
<comment type="similarity">
    <text evidence="1 3">Belongs to the SHMT family.</text>
</comment>
<proteinExistence type="evidence at protein level"/>
<evidence type="ECO:0000255" key="1">
    <source>
        <dbReference type="HAMAP-Rule" id="MF_00051"/>
    </source>
</evidence>
<evidence type="ECO:0000269" key="2">
    <source>
    </source>
</evidence>
<evidence type="ECO:0000305" key="3"/>
<reference key="1">
    <citation type="journal article" date="2006" name="J. Bacteriol.">
        <title>The Methanosarcina barkeri genome: comparative analysis with Methanosarcina acetivorans and Methanosarcina mazei reveals extensive rearrangement within methanosarcinal genomes.</title>
        <authorList>
            <person name="Maeder D.L."/>
            <person name="Anderson I."/>
            <person name="Brettin T.S."/>
            <person name="Bruce D.C."/>
            <person name="Gilna P."/>
            <person name="Han C.S."/>
            <person name="Lapidus A."/>
            <person name="Metcalf W.W."/>
            <person name="Saunders E."/>
            <person name="Tapia R."/>
            <person name="Sowers K.R."/>
        </authorList>
    </citation>
    <scope>NUCLEOTIDE SEQUENCE [LARGE SCALE GENOMIC DNA]</scope>
    <source>
        <strain>Fusaro / DSM 804</strain>
    </source>
</reference>
<reference key="2">
    <citation type="journal article" date="2004" name="Arch. Microbiol.">
        <title>Tetrahydrofolate-specific enzymes in Methanosarcina barkeri and growth dependence of this methanogenic archaeon on folic acid or p-aminobenzoic acid.</title>
        <authorList>
            <person name="Buchenau B."/>
            <person name="Thauer R.K."/>
        </authorList>
    </citation>
    <scope>PROTEIN SEQUENCE OF 1-13</scope>
    <scope>FUNCTION</scope>
    <scope>THF-DEPENDENT SERINE HYDROXYMETHYLTRANSFERASE ACTIVITY</scope>
    <scope>CATALYTIC ACTIVITY</scope>
    <scope>ALDOLASE ACTIVITY</scope>
    <scope>COFACTOR</scope>
    <scope>SUBSTRATE SPECIFICITY</scope>
    <scope>BIOPHYSICOCHEMICAL PROPERTIES</scope>
    <scope>SUBUNIT</scope>
    <source>
        <strain>Fusaro / DSM 804</strain>
    </source>
</reference>
<protein>
    <recommendedName>
        <fullName evidence="1">Serine hydroxymethyltransferase</fullName>
        <shortName evidence="1">SHMT</shortName>
        <shortName evidence="1">Serine methylase</shortName>
        <ecNumber evidence="1 2">2.1.2.1</ecNumber>
    </recommendedName>
</protein>
<keyword id="KW-0028">Amino-acid biosynthesis</keyword>
<keyword id="KW-0963">Cytoplasm</keyword>
<keyword id="KW-0903">Direct protein sequencing</keyword>
<keyword id="KW-0554">One-carbon metabolism</keyword>
<keyword id="KW-0663">Pyridoxal phosphate</keyword>
<keyword id="KW-0808">Transferase</keyword>
<sequence length="412" mass="45049">MSYIEKTDPELFEAIKKEAERQEYKLNLIASENYASKAVMEAQGSILTNKYAEGYSGKRYYGGCDFVDIAEDLAIARAKKIFNAGYVNVQPHSGSGANMAVYFSVLKPGDTIMSMDLSHGGHLSHGSPVSFSGKLFNIVPYGVSKKTEMLDYSELMKKAKENKPQMIVCGASAYPREIDFKQFREIADEVGAYLLADIAHIAGLVVAGVHPSPVPYADFVTSTTHKTLRGPRGGIIISKTEELATRINKAVFPGLQGGPLMHIIAGKAVAFKEAMSEKFKQDQVQTVKNAKTLCKCLKEKGFDMVSGDTDNHLMLVNLNNMNITGKDAEAALSKAGIIANKNTVPFETRSPFITSGVRLGTPACTTRGMKETEMELIADYIETAITNSENDKILSETSDKVRELCSRFPVYC</sequence>
<organism>
    <name type="scientific">Methanosarcina barkeri (strain Fusaro / DSM 804)</name>
    <dbReference type="NCBI Taxonomy" id="269797"/>
    <lineage>
        <taxon>Archaea</taxon>
        <taxon>Methanobacteriati</taxon>
        <taxon>Methanobacteriota</taxon>
        <taxon>Stenosarchaea group</taxon>
        <taxon>Methanomicrobia</taxon>
        <taxon>Methanosarcinales</taxon>
        <taxon>Methanosarcinaceae</taxon>
        <taxon>Methanosarcina</taxon>
    </lineage>
</organism>
<feature type="chain" id="PRO_0000235053" description="Serine hydroxymethyltransferase">
    <location>
        <begin position="1"/>
        <end position="412"/>
    </location>
</feature>
<feature type="binding site" evidence="1">
    <location>
        <position position="117"/>
    </location>
    <ligand>
        <name>(6S)-5,6,7,8-tetrahydrofolate</name>
        <dbReference type="ChEBI" id="CHEBI:57453"/>
    </ligand>
</feature>
<feature type="binding site" evidence="1">
    <location>
        <begin position="121"/>
        <end position="123"/>
    </location>
    <ligand>
        <name>(6S)-5,6,7,8-tetrahydrofolate</name>
        <dbReference type="ChEBI" id="CHEBI:57453"/>
    </ligand>
</feature>
<feature type="binding site" evidence="1">
    <location>
        <position position="242"/>
    </location>
    <ligand>
        <name>(6S)-5,6,7,8-tetrahydrofolate</name>
        <dbReference type="ChEBI" id="CHEBI:57453"/>
    </ligand>
</feature>
<feature type="binding site" evidence="1">
    <location>
        <begin position="350"/>
        <end position="352"/>
    </location>
    <ligand>
        <name>(6S)-5,6,7,8-tetrahydrofolate</name>
        <dbReference type="ChEBI" id="CHEBI:57453"/>
    </ligand>
</feature>
<feature type="site" description="Plays an important role in substrate specificity" evidence="1">
    <location>
        <position position="225"/>
    </location>
</feature>
<feature type="modified residue" description="N6-(pyridoxal phosphate)lysine" evidence="1">
    <location>
        <position position="226"/>
    </location>
</feature>
<accession>Q46A52</accession>
<name>GLYA_METBF</name>